<accession>Q9PPM1</accession>
<accession>Q0PAJ3</accession>
<protein>
    <recommendedName>
        <fullName evidence="1">4-hydroxy-3-methylbut-2-en-1-yl diphosphate synthase (flavodoxin)</fullName>
        <ecNumber evidence="1">1.17.7.3</ecNumber>
    </recommendedName>
    <alternativeName>
        <fullName evidence="1">1-hydroxy-2-methyl-2-(E)-butenyl 4-diphosphate synthase</fullName>
    </alternativeName>
</protein>
<gene>
    <name evidence="1" type="primary">ispG</name>
    <name type="synonym">gcpE</name>
    <name type="ordered locus">Cj0686</name>
</gene>
<reference key="1">
    <citation type="journal article" date="2000" name="Nature">
        <title>The genome sequence of the food-borne pathogen Campylobacter jejuni reveals hypervariable sequences.</title>
        <authorList>
            <person name="Parkhill J."/>
            <person name="Wren B.W."/>
            <person name="Mungall K.L."/>
            <person name="Ketley J.M."/>
            <person name="Churcher C.M."/>
            <person name="Basham D."/>
            <person name="Chillingworth T."/>
            <person name="Davies R.M."/>
            <person name="Feltwell T."/>
            <person name="Holroyd S."/>
            <person name="Jagels K."/>
            <person name="Karlyshev A.V."/>
            <person name="Moule S."/>
            <person name="Pallen M.J."/>
            <person name="Penn C.W."/>
            <person name="Quail M.A."/>
            <person name="Rajandream M.A."/>
            <person name="Rutherford K.M."/>
            <person name="van Vliet A.H.M."/>
            <person name="Whitehead S."/>
            <person name="Barrell B.G."/>
        </authorList>
    </citation>
    <scope>NUCLEOTIDE SEQUENCE [LARGE SCALE GENOMIC DNA]</scope>
    <source>
        <strain>ATCC 700819 / NCTC 11168</strain>
    </source>
</reference>
<dbReference type="EC" id="1.17.7.3" evidence="1"/>
<dbReference type="EMBL" id="AL111168">
    <property type="protein sequence ID" value="CAL34823.1"/>
    <property type="molecule type" value="Genomic_DNA"/>
</dbReference>
<dbReference type="PIR" id="A81339">
    <property type="entry name" value="A81339"/>
</dbReference>
<dbReference type="RefSeq" id="WP_002852250.1">
    <property type="nucleotide sequence ID" value="NZ_SZUC01000002.1"/>
</dbReference>
<dbReference type="RefSeq" id="YP_002344104.1">
    <property type="nucleotide sequence ID" value="NC_002163.1"/>
</dbReference>
<dbReference type="SMR" id="Q9PPM1"/>
<dbReference type="IntAct" id="Q9PPM1">
    <property type="interactions" value="8"/>
</dbReference>
<dbReference type="STRING" id="192222.Cj0686"/>
<dbReference type="PaxDb" id="192222-Cj0686"/>
<dbReference type="EnsemblBacteria" id="CAL34823">
    <property type="protein sequence ID" value="CAL34823"/>
    <property type="gene ID" value="Cj0686"/>
</dbReference>
<dbReference type="GeneID" id="905004"/>
<dbReference type="KEGG" id="cje:Cj0686"/>
<dbReference type="PATRIC" id="fig|192222.6.peg.678"/>
<dbReference type="eggNOG" id="COG0821">
    <property type="taxonomic scope" value="Bacteria"/>
</dbReference>
<dbReference type="HOGENOM" id="CLU_042258_0_0_7"/>
<dbReference type="OrthoDB" id="9803214at2"/>
<dbReference type="UniPathway" id="UPA00056">
    <property type="reaction ID" value="UER00096"/>
</dbReference>
<dbReference type="Proteomes" id="UP000000799">
    <property type="component" value="Chromosome"/>
</dbReference>
<dbReference type="GO" id="GO:0051539">
    <property type="term" value="F:4 iron, 4 sulfur cluster binding"/>
    <property type="evidence" value="ECO:0007669"/>
    <property type="project" value="UniProtKB-UniRule"/>
</dbReference>
<dbReference type="GO" id="GO:0046429">
    <property type="term" value="F:4-hydroxy-3-methylbut-2-en-1-yl diphosphate synthase activity (ferredoxin)"/>
    <property type="evidence" value="ECO:0007669"/>
    <property type="project" value="UniProtKB-UniRule"/>
</dbReference>
<dbReference type="GO" id="GO:0141197">
    <property type="term" value="F:4-hydroxy-3-methylbut-2-enyl-diphosphate synthase activity (flavodoxin)"/>
    <property type="evidence" value="ECO:0007669"/>
    <property type="project" value="UniProtKB-EC"/>
</dbReference>
<dbReference type="GO" id="GO:0005506">
    <property type="term" value="F:iron ion binding"/>
    <property type="evidence" value="ECO:0007669"/>
    <property type="project" value="InterPro"/>
</dbReference>
<dbReference type="GO" id="GO:0019288">
    <property type="term" value="P:isopentenyl diphosphate biosynthetic process, methylerythritol 4-phosphate pathway"/>
    <property type="evidence" value="ECO:0007669"/>
    <property type="project" value="UniProtKB-UniRule"/>
</dbReference>
<dbReference type="GO" id="GO:0016114">
    <property type="term" value="P:terpenoid biosynthetic process"/>
    <property type="evidence" value="ECO:0007669"/>
    <property type="project" value="InterPro"/>
</dbReference>
<dbReference type="FunFam" id="3.20.20.20:FF:000001">
    <property type="entry name" value="4-hydroxy-3-methylbut-2-en-1-yl diphosphate synthase (flavodoxin)"/>
    <property type="match status" value="1"/>
</dbReference>
<dbReference type="Gene3D" id="3.20.20.20">
    <property type="entry name" value="Dihydropteroate synthase-like"/>
    <property type="match status" value="1"/>
</dbReference>
<dbReference type="Gene3D" id="3.30.413.10">
    <property type="entry name" value="Sulfite Reductase Hemoprotein, domain 1"/>
    <property type="match status" value="1"/>
</dbReference>
<dbReference type="HAMAP" id="MF_00159">
    <property type="entry name" value="IspG"/>
    <property type="match status" value="1"/>
</dbReference>
<dbReference type="InterPro" id="IPR011005">
    <property type="entry name" value="Dihydropteroate_synth-like_sf"/>
</dbReference>
<dbReference type="InterPro" id="IPR016425">
    <property type="entry name" value="IspG_bac"/>
</dbReference>
<dbReference type="InterPro" id="IPR004588">
    <property type="entry name" value="IspG_bac-typ"/>
</dbReference>
<dbReference type="InterPro" id="IPR045854">
    <property type="entry name" value="NO2/SO3_Rdtase_4Fe4S_sf"/>
</dbReference>
<dbReference type="NCBIfam" id="TIGR00612">
    <property type="entry name" value="ispG_gcpE"/>
    <property type="match status" value="1"/>
</dbReference>
<dbReference type="NCBIfam" id="NF001540">
    <property type="entry name" value="PRK00366.1"/>
    <property type="match status" value="1"/>
</dbReference>
<dbReference type="PANTHER" id="PTHR30454">
    <property type="entry name" value="4-HYDROXY-3-METHYLBUT-2-EN-1-YL DIPHOSPHATE SYNTHASE"/>
    <property type="match status" value="1"/>
</dbReference>
<dbReference type="PANTHER" id="PTHR30454:SF0">
    <property type="entry name" value="4-HYDROXY-3-METHYLBUT-2-EN-1-YL DIPHOSPHATE SYNTHASE (FERREDOXIN), CHLOROPLASTIC"/>
    <property type="match status" value="1"/>
</dbReference>
<dbReference type="Pfam" id="PF04551">
    <property type="entry name" value="GcpE"/>
    <property type="match status" value="1"/>
</dbReference>
<dbReference type="PIRSF" id="PIRSF004640">
    <property type="entry name" value="IspG"/>
    <property type="match status" value="1"/>
</dbReference>
<dbReference type="SUPFAM" id="SSF51717">
    <property type="entry name" value="Dihydropteroate synthetase-like"/>
    <property type="match status" value="1"/>
</dbReference>
<dbReference type="SUPFAM" id="SSF56014">
    <property type="entry name" value="Nitrite and sulphite reductase 4Fe-4S domain-like"/>
    <property type="match status" value="1"/>
</dbReference>
<name>ISPG_CAMJE</name>
<evidence type="ECO:0000255" key="1">
    <source>
        <dbReference type="HAMAP-Rule" id="MF_00159"/>
    </source>
</evidence>
<comment type="function">
    <text evidence="1">Converts 2C-methyl-D-erythritol 2,4-cyclodiphosphate (ME-2,4cPP) into 1-hydroxy-2-methyl-2-(E)-butenyl 4-diphosphate.</text>
</comment>
<comment type="catalytic activity">
    <reaction evidence="1">
        <text>(2E)-4-hydroxy-3-methylbut-2-enyl diphosphate + oxidized [flavodoxin] + H2O + 2 H(+) = 2-C-methyl-D-erythritol 2,4-cyclic diphosphate + reduced [flavodoxin]</text>
        <dbReference type="Rhea" id="RHEA:43604"/>
        <dbReference type="Rhea" id="RHEA-COMP:10622"/>
        <dbReference type="Rhea" id="RHEA-COMP:10623"/>
        <dbReference type="ChEBI" id="CHEBI:15377"/>
        <dbReference type="ChEBI" id="CHEBI:15378"/>
        <dbReference type="ChEBI" id="CHEBI:57618"/>
        <dbReference type="ChEBI" id="CHEBI:58210"/>
        <dbReference type="ChEBI" id="CHEBI:58483"/>
        <dbReference type="ChEBI" id="CHEBI:128753"/>
        <dbReference type="EC" id="1.17.7.3"/>
    </reaction>
</comment>
<comment type="cofactor">
    <cofactor evidence="1">
        <name>[4Fe-4S] cluster</name>
        <dbReference type="ChEBI" id="CHEBI:49883"/>
    </cofactor>
    <text evidence="1">Binds 1 [4Fe-4S] cluster.</text>
</comment>
<comment type="pathway">
    <text evidence="1">Isoprenoid biosynthesis; isopentenyl diphosphate biosynthesis via DXP pathway; isopentenyl diphosphate from 1-deoxy-D-xylulose 5-phosphate: step 5/6.</text>
</comment>
<comment type="similarity">
    <text evidence="1">Belongs to the IspG family.</text>
</comment>
<sequence>MEYKRFKTRQIKVGNVLIGGDAPISVQSMLFTKTRDIEGSLEQINRLYFAGANIVRLACLDMADARALKEIKAKSPLPLIVDIHFNHNLAVYCAEFIDGVRINPGNIGSKENIKEVVKACKERGIPIRIGVNHGSIEKQFSDKFGYGVDAMLESAMYNIKLLEDLDFFDIKISMKTSDAQKTIEAYERLRPLCDYPFHLGVTEAGTKFHSTVKSSIALGNLLLKGIGDTMRVSMTGELEEEIRVARAILQDSGVQKSGVNIISCPTCGRIQSDLLSAIKIVEEKTKHIKEPLNISVMGCVVNALGEAKGADVAIAFGKNQGLVIRHGEVVAKLKESELVDRFLAEVEDEVKSRVVKE</sequence>
<organism>
    <name type="scientific">Campylobacter jejuni subsp. jejuni serotype O:2 (strain ATCC 700819 / NCTC 11168)</name>
    <dbReference type="NCBI Taxonomy" id="192222"/>
    <lineage>
        <taxon>Bacteria</taxon>
        <taxon>Pseudomonadati</taxon>
        <taxon>Campylobacterota</taxon>
        <taxon>Epsilonproteobacteria</taxon>
        <taxon>Campylobacterales</taxon>
        <taxon>Campylobacteraceae</taxon>
        <taxon>Campylobacter</taxon>
    </lineage>
</organism>
<proteinExistence type="inferred from homology"/>
<keyword id="KW-0004">4Fe-4S</keyword>
<keyword id="KW-0408">Iron</keyword>
<keyword id="KW-0411">Iron-sulfur</keyword>
<keyword id="KW-0414">Isoprene biosynthesis</keyword>
<keyword id="KW-0479">Metal-binding</keyword>
<keyword id="KW-0560">Oxidoreductase</keyword>
<keyword id="KW-1185">Reference proteome</keyword>
<feature type="chain" id="PRO_0000190553" description="4-hydroxy-3-methylbut-2-en-1-yl diphosphate synthase (flavodoxin)">
    <location>
        <begin position="1"/>
        <end position="357"/>
    </location>
</feature>
<feature type="binding site" evidence="1">
    <location>
        <position position="264"/>
    </location>
    <ligand>
        <name>[4Fe-4S] cluster</name>
        <dbReference type="ChEBI" id="CHEBI:49883"/>
    </ligand>
</feature>
<feature type="binding site" evidence="1">
    <location>
        <position position="267"/>
    </location>
    <ligand>
        <name>[4Fe-4S] cluster</name>
        <dbReference type="ChEBI" id="CHEBI:49883"/>
    </ligand>
</feature>
<feature type="binding site" evidence="1">
    <location>
        <position position="299"/>
    </location>
    <ligand>
        <name>[4Fe-4S] cluster</name>
        <dbReference type="ChEBI" id="CHEBI:49883"/>
    </ligand>
</feature>
<feature type="binding site" evidence="1">
    <location>
        <position position="306"/>
    </location>
    <ligand>
        <name>[4Fe-4S] cluster</name>
        <dbReference type="ChEBI" id="CHEBI:49883"/>
    </ligand>
</feature>